<name>SCX29_CENNO</name>
<accession>A0A5H1ZR48</accession>
<accession>C0HLK4</accession>
<dbReference type="PDB" id="6NW8">
    <property type="method" value="NMR"/>
    <property type="chains" value="A=1-27"/>
</dbReference>
<dbReference type="PDBsum" id="6NW8"/>
<dbReference type="SMR" id="A0A5H1ZR48"/>
<dbReference type="GO" id="GO:0005576">
    <property type="term" value="C:extracellular region"/>
    <property type="evidence" value="ECO:0000314"/>
    <property type="project" value="UniProtKB"/>
</dbReference>
<proteinExistence type="evidence at protein level"/>
<evidence type="ECO:0000269" key="1">
    <source>
    </source>
</evidence>
<evidence type="ECO:0000303" key="2">
    <source>
    </source>
</evidence>
<evidence type="ECO:0000305" key="3"/>
<evidence type="ECO:0000305" key="4">
    <source>
    </source>
</evidence>
<evidence type="ECO:0007744" key="5">
    <source>
        <dbReference type="PDB" id="6NW8"/>
    </source>
</evidence>
<evidence type="ECO:0007829" key="6">
    <source>
        <dbReference type="PDB" id="6NW8"/>
    </source>
</evidence>
<keyword id="KW-0002">3D-structure</keyword>
<keyword id="KW-0903">Direct protein sequencing</keyword>
<keyword id="KW-1015">Disulfide bond</keyword>
<keyword id="KW-0964">Secreted</keyword>
<comment type="subcellular location">
    <subcellularLocation>
        <location evidence="1">Secreted</location>
    </subcellularLocation>
</comment>
<comment type="tissue specificity">
    <text evidence="4">Expressed by the venom gland.</text>
</comment>
<comment type="mass spectrometry" mass="2820.6" method="Electrospray" evidence="1"/>
<comment type="miscellaneous">
    <text evidence="1">Negative results: does not show any toxicity upon intracerebroventricular injection into mice and abdominal injection into crickets. Has no effect on human voltage-gated sodium (Nav1.5/SCN5A, Nav1.6/SCN8A and Nav1.7/SCN9A) and potassium (Kv1.1/KCNA1 and Kv1.4/KCNA4) currents (in vitro).</text>
</comment>
<organism evidence="2">
    <name type="scientific">Centruroides noxius</name>
    <name type="common">Mexican scorpion</name>
    <dbReference type="NCBI Taxonomy" id="6878"/>
    <lineage>
        <taxon>Eukaryota</taxon>
        <taxon>Metazoa</taxon>
        <taxon>Ecdysozoa</taxon>
        <taxon>Arthropoda</taxon>
        <taxon>Chelicerata</taxon>
        <taxon>Arachnida</taxon>
        <taxon>Scorpiones</taxon>
        <taxon>Buthida</taxon>
        <taxon>Buthoidea</taxon>
        <taxon>Buthidae</taxon>
        <taxon>Centruroides</taxon>
    </lineage>
</organism>
<feature type="chain" id="PRO_0000450602" description="Peptide Cn29">
    <location>
        <begin position="1"/>
        <end position="27"/>
    </location>
</feature>
<feature type="disulfide bond" evidence="1 5">
    <location>
        <begin position="2"/>
        <end position="23"/>
    </location>
</feature>
<feature type="disulfide bond" evidence="1 5">
    <location>
        <begin position="5"/>
        <end position="18"/>
    </location>
</feature>
<feature type="disulfide bond" evidence="1 5">
    <location>
        <begin position="12"/>
        <end position="25"/>
    </location>
</feature>
<feature type="strand" evidence="6">
    <location>
        <begin position="3"/>
        <end position="6"/>
    </location>
</feature>
<feature type="helix" evidence="6">
    <location>
        <begin position="10"/>
        <end position="14"/>
    </location>
</feature>
<feature type="strand" evidence="6">
    <location>
        <begin position="15"/>
        <end position="19"/>
    </location>
</feature>
<feature type="strand" evidence="6">
    <location>
        <begin position="22"/>
        <end position="24"/>
    </location>
</feature>
<reference evidence="3" key="1">
    <citation type="journal article" date="2019" name="Toxicon">
        <title>Cn29, a novel orphan peptide found in the venom of the scorpion Centruroides noxius: Structure and function.</title>
        <authorList>
            <person name="Gurrola G.B."/>
            <person name="Guijarro J.I."/>
            <person name="Delepierre M."/>
            <person name="Mendoza R.L.L."/>
            <person name="Cid-Uribe J.I."/>
            <person name="Coronas F.V."/>
            <person name="Possani L.D."/>
        </authorList>
    </citation>
    <scope>STRUCTURE BY NMR</scope>
    <scope>PROTEIN SEQUENCE</scope>
    <scope>SYNTHESIS</scope>
    <scope>SUBCELLULAR LOCATION</scope>
    <scope>MASS SPECTROMETRY</scope>
    <scope>DISULFIDE BOND</scope>
    <source>
        <tissue evidence="2">Venom</tissue>
    </source>
</reference>
<sequence length="27" mass="2827">LCLSCRGGDYDCRVKGTCENGKCVCGS</sequence>
<protein>
    <recommendedName>
        <fullName evidence="2">Peptide Cn29</fullName>
    </recommendedName>
</protein>